<proteinExistence type="inferred from homology"/>
<evidence type="ECO:0000255" key="1">
    <source>
        <dbReference type="HAMAP-Rule" id="MF_00318"/>
    </source>
</evidence>
<protein>
    <recommendedName>
        <fullName evidence="1">Enolase</fullName>
        <ecNumber evidence="1">4.2.1.11</ecNumber>
    </recommendedName>
    <alternativeName>
        <fullName evidence="1">2-phospho-D-glycerate hydro-lyase</fullName>
    </alternativeName>
    <alternativeName>
        <fullName evidence="1">2-phosphoglycerate dehydratase</fullName>
    </alternativeName>
</protein>
<dbReference type="EC" id="4.2.1.11" evidence="1"/>
<dbReference type="EMBL" id="CP000518">
    <property type="protein sequence ID" value="ABL93517.1"/>
    <property type="molecule type" value="Genomic_DNA"/>
</dbReference>
<dbReference type="SMR" id="A1UL09"/>
<dbReference type="STRING" id="189918.Mkms_4326"/>
<dbReference type="KEGG" id="mkm:Mkms_4326"/>
<dbReference type="HOGENOM" id="CLU_031223_2_1_11"/>
<dbReference type="OrthoDB" id="9804716at2"/>
<dbReference type="UniPathway" id="UPA00109">
    <property type="reaction ID" value="UER00187"/>
</dbReference>
<dbReference type="GO" id="GO:0009986">
    <property type="term" value="C:cell surface"/>
    <property type="evidence" value="ECO:0007669"/>
    <property type="project" value="UniProtKB-SubCell"/>
</dbReference>
<dbReference type="GO" id="GO:0005576">
    <property type="term" value="C:extracellular region"/>
    <property type="evidence" value="ECO:0007669"/>
    <property type="project" value="UniProtKB-SubCell"/>
</dbReference>
<dbReference type="GO" id="GO:0000015">
    <property type="term" value="C:phosphopyruvate hydratase complex"/>
    <property type="evidence" value="ECO:0007669"/>
    <property type="project" value="InterPro"/>
</dbReference>
<dbReference type="GO" id="GO:0000287">
    <property type="term" value="F:magnesium ion binding"/>
    <property type="evidence" value="ECO:0007669"/>
    <property type="project" value="UniProtKB-UniRule"/>
</dbReference>
<dbReference type="GO" id="GO:0004634">
    <property type="term" value="F:phosphopyruvate hydratase activity"/>
    <property type="evidence" value="ECO:0007669"/>
    <property type="project" value="UniProtKB-UniRule"/>
</dbReference>
<dbReference type="GO" id="GO:0006096">
    <property type="term" value="P:glycolytic process"/>
    <property type="evidence" value="ECO:0007669"/>
    <property type="project" value="UniProtKB-UniRule"/>
</dbReference>
<dbReference type="CDD" id="cd03313">
    <property type="entry name" value="enolase"/>
    <property type="match status" value="1"/>
</dbReference>
<dbReference type="FunFam" id="3.20.20.120:FF:000001">
    <property type="entry name" value="Enolase"/>
    <property type="match status" value="1"/>
</dbReference>
<dbReference type="FunFam" id="3.30.390.10:FF:000001">
    <property type="entry name" value="Enolase"/>
    <property type="match status" value="1"/>
</dbReference>
<dbReference type="Gene3D" id="3.20.20.120">
    <property type="entry name" value="Enolase-like C-terminal domain"/>
    <property type="match status" value="1"/>
</dbReference>
<dbReference type="Gene3D" id="3.30.390.10">
    <property type="entry name" value="Enolase-like, N-terminal domain"/>
    <property type="match status" value="1"/>
</dbReference>
<dbReference type="HAMAP" id="MF_00318">
    <property type="entry name" value="Enolase"/>
    <property type="match status" value="1"/>
</dbReference>
<dbReference type="InterPro" id="IPR000941">
    <property type="entry name" value="Enolase"/>
</dbReference>
<dbReference type="InterPro" id="IPR036849">
    <property type="entry name" value="Enolase-like_C_sf"/>
</dbReference>
<dbReference type="InterPro" id="IPR029017">
    <property type="entry name" value="Enolase-like_N"/>
</dbReference>
<dbReference type="InterPro" id="IPR020810">
    <property type="entry name" value="Enolase_C"/>
</dbReference>
<dbReference type="InterPro" id="IPR020809">
    <property type="entry name" value="Enolase_CS"/>
</dbReference>
<dbReference type="InterPro" id="IPR020811">
    <property type="entry name" value="Enolase_N"/>
</dbReference>
<dbReference type="NCBIfam" id="TIGR01060">
    <property type="entry name" value="eno"/>
    <property type="match status" value="1"/>
</dbReference>
<dbReference type="PANTHER" id="PTHR11902">
    <property type="entry name" value="ENOLASE"/>
    <property type="match status" value="1"/>
</dbReference>
<dbReference type="PANTHER" id="PTHR11902:SF1">
    <property type="entry name" value="ENOLASE"/>
    <property type="match status" value="1"/>
</dbReference>
<dbReference type="Pfam" id="PF00113">
    <property type="entry name" value="Enolase_C"/>
    <property type="match status" value="1"/>
</dbReference>
<dbReference type="Pfam" id="PF03952">
    <property type="entry name" value="Enolase_N"/>
    <property type="match status" value="1"/>
</dbReference>
<dbReference type="PIRSF" id="PIRSF001400">
    <property type="entry name" value="Enolase"/>
    <property type="match status" value="1"/>
</dbReference>
<dbReference type="PRINTS" id="PR00148">
    <property type="entry name" value="ENOLASE"/>
</dbReference>
<dbReference type="SFLD" id="SFLDS00001">
    <property type="entry name" value="Enolase"/>
    <property type="match status" value="1"/>
</dbReference>
<dbReference type="SFLD" id="SFLDF00002">
    <property type="entry name" value="enolase"/>
    <property type="match status" value="1"/>
</dbReference>
<dbReference type="SMART" id="SM01192">
    <property type="entry name" value="Enolase_C"/>
    <property type="match status" value="1"/>
</dbReference>
<dbReference type="SMART" id="SM01193">
    <property type="entry name" value="Enolase_N"/>
    <property type="match status" value="1"/>
</dbReference>
<dbReference type="SUPFAM" id="SSF51604">
    <property type="entry name" value="Enolase C-terminal domain-like"/>
    <property type="match status" value="1"/>
</dbReference>
<dbReference type="SUPFAM" id="SSF54826">
    <property type="entry name" value="Enolase N-terminal domain-like"/>
    <property type="match status" value="1"/>
</dbReference>
<dbReference type="PROSITE" id="PS00164">
    <property type="entry name" value="ENOLASE"/>
    <property type="match status" value="1"/>
</dbReference>
<accession>A1UL09</accession>
<sequence length="429" mass="45164">MPIIEQVGAREILDSRGNPTVEVELALTDGTFARAAVPSGASTGEHEAVELRDGGSRYGGKGVDKAVQAVLDDIAPAVIGMSADDQRLIDQALLDLDGTPDKSRLGANAILGVSLAVSKAAAESAGLPLFRYLGGPNAHILPVPMMNILNGGAHADTGVDVQEFMVAPIGAPSFKEALRWGAEVYHSLKSVLKKQGLSTGLGDEGGFAPDVAGTKAALDLISSAIEAAGFKLGTDVTLALDVAATEFYTEGTGYSFEKETRTAEQMAEFYASLLDAYPLVSIEDPLSEDDWDGWVSLTTQIGDRVQLVGDDLFVTNPERLEEGIERGAANALLVKVNQIGTLTETLDAVALAHNSGYRTMMSHRSGETEDTTIADLAVAVGSGQIKTGAPARSERVAKYNQLLRIEETLGDAARYAGDLAFPRFALETK</sequence>
<gene>
    <name evidence="1" type="primary">eno</name>
    <name type="ordered locus">Mkms_4326</name>
</gene>
<reference key="1">
    <citation type="submission" date="2006-12" db="EMBL/GenBank/DDBJ databases">
        <title>Complete sequence of chromosome of Mycobacterium sp. KMS.</title>
        <authorList>
            <consortium name="US DOE Joint Genome Institute"/>
            <person name="Copeland A."/>
            <person name="Lucas S."/>
            <person name="Lapidus A."/>
            <person name="Barry K."/>
            <person name="Detter J.C."/>
            <person name="Glavina del Rio T."/>
            <person name="Hammon N."/>
            <person name="Israni S."/>
            <person name="Dalin E."/>
            <person name="Tice H."/>
            <person name="Pitluck S."/>
            <person name="Kiss H."/>
            <person name="Brettin T."/>
            <person name="Bruce D."/>
            <person name="Han C."/>
            <person name="Tapia R."/>
            <person name="Gilna P."/>
            <person name="Schmutz J."/>
            <person name="Larimer F."/>
            <person name="Land M."/>
            <person name="Hauser L."/>
            <person name="Kyrpides N."/>
            <person name="Mikhailova N."/>
            <person name="Miller C.D."/>
            <person name="Richardson P."/>
        </authorList>
    </citation>
    <scope>NUCLEOTIDE SEQUENCE [LARGE SCALE GENOMIC DNA]</scope>
    <source>
        <strain>KMS</strain>
    </source>
</reference>
<feature type="chain" id="PRO_1000019224" description="Enolase">
    <location>
        <begin position="1"/>
        <end position="429"/>
    </location>
</feature>
<feature type="active site" description="Proton donor" evidence="1">
    <location>
        <position position="204"/>
    </location>
</feature>
<feature type="active site" description="Proton acceptor" evidence="1">
    <location>
        <position position="335"/>
    </location>
</feature>
<feature type="binding site" evidence="1">
    <location>
        <position position="162"/>
    </location>
    <ligand>
        <name>(2R)-2-phosphoglycerate</name>
        <dbReference type="ChEBI" id="CHEBI:58289"/>
    </ligand>
</feature>
<feature type="binding site" evidence="1">
    <location>
        <position position="241"/>
    </location>
    <ligand>
        <name>Mg(2+)</name>
        <dbReference type="ChEBI" id="CHEBI:18420"/>
    </ligand>
</feature>
<feature type="binding site" evidence="1">
    <location>
        <position position="283"/>
    </location>
    <ligand>
        <name>Mg(2+)</name>
        <dbReference type="ChEBI" id="CHEBI:18420"/>
    </ligand>
</feature>
<feature type="binding site" evidence="1">
    <location>
        <position position="310"/>
    </location>
    <ligand>
        <name>Mg(2+)</name>
        <dbReference type="ChEBI" id="CHEBI:18420"/>
    </ligand>
</feature>
<feature type="binding site" evidence="1">
    <location>
        <position position="335"/>
    </location>
    <ligand>
        <name>(2R)-2-phosphoglycerate</name>
        <dbReference type="ChEBI" id="CHEBI:58289"/>
    </ligand>
</feature>
<feature type="binding site" evidence="1">
    <location>
        <position position="364"/>
    </location>
    <ligand>
        <name>(2R)-2-phosphoglycerate</name>
        <dbReference type="ChEBI" id="CHEBI:58289"/>
    </ligand>
</feature>
<feature type="binding site" evidence="1">
    <location>
        <position position="365"/>
    </location>
    <ligand>
        <name>(2R)-2-phosphoglycerate</name>
        <dbReference type="ChEBI" id="CHEBI:58289"/>
    </ligand>
</feature>
<feature type="binding site" evidence="1">
    <location>
        <position position="386"/>
    </location>
    <ligand>
        <name>(2R)-2-phosphoglycerate</name>
        <dbReference type="ChEBI" id="CHEBI:58289"/>
    </ligand>
</feature>
<comment type="function">
    <text evidence="1">Catalyzes the reversible conversion of 2-phosphoglycerate (2-PG) into phosphoenolpyruvate (PEP). It is essential for the degradation of carbohydrates via glycolysis.</text>
</comment>
<comment type="catalytic activity">
    <reaction evidence="1">
        <text>(2R)-2-phosphoglycerate = phosphoenolpyruvate + H2O</text>
        <dbReference type="Rhea" id="RHEA:10164"/>
        <dbReference type="ChEBI" id="CHEBI:15377"/>
        <dbReference type="ChEBI" id="CHEBI:58289"/>
        <dbReference type="ChEBI" id="CHEBI:58702"/>
        <dbReference type="EC" id="4.2.1.11"/>
    </reaction>
</comment>
<comment type="cofactor">
    <cofactor evidence="1">
        <name>Mg(2+)</name>
        <dbReference type="ChEBI" id="CHEBI:18420"/>
    </cofactor>
    <text evidence="1">Binds a second Mg(2+) ion via substrate during catalysis.</text>
</comment>
<comment type="pathway">
    <text evidence="1">Carbohydrate degradation; glycolysis; pyruvate from D-glyceraldehyde 3-phosphate: step 4/5.</text>
</comment>
<comment type="subcellular location">
    <subcellularLocation>
        <location evidence="1">Cytoplasm</location>
    </subcellularLocation>
    <subcellularLocation>
        <location evidence="1">Secreted</location>
    </subcellularLocation>
    <subcellularLocation>
        <location evidence="1">Cell surface</location>
    </subcellularLocation>
    <text evidence="1">Fractions of enolase are present in both the cytoplasm and on the cell surface.</text>
</comment>
<comment type="similarity">
    <text evidence="1">Belongs to the enolase family.</text>
</comment>
<name>ENO_MYCSK</name>
<organism>
    <name type="scientific">Mycobacterium sp. (strain KMS)</name>
    <dbReference type="NCBI Taxonomy" id="189918"/>
    <lineage>
        <taxon>Bacteria</taxon>
        <taxon>Bacillati</taxon>
        <taxon>Actinomycetota</taxon>
        <taxon>Actinomycetes</taxon>
        <taxon>Mycobacteriales</taxon>
        <taxon>Mycobacteriaceae</taxon>
        <taxon>Mycobacterium</taxon>
    </lineage>
</organism>
<keyword id="KW-0963">Cytoplasm</keyword>
<keyword id="KW-0324">Glycolysis</keyword>
<keyword id="KW-0456">Lyase</keyword>
<keyword id="KW-0460">Magnesium</keyword>
<keyword id="KW-0479">Metal-binding</keyword>
<keyword id="KW-0964">Secreted</keyword>